<accession>C5BHE8</accession>
<gene>
    <name evidence="1" type="primary">hemE</name>
    <name type="ordered locus">NT01EI_0180</name>
</gene>
<protein>
    <recommendedName>
        <fullName evidence="1">Uroporphyrinogen decarboxylase</fullName>
        <shortName evidence="1">UPD</shortName>
        <shortName evidence="1">URO-D</shortName>
        <ecNumber evidence="1">4.1.1.37</ecNumber>
    </recommendedName>
</protein>
<keyword id="KW-0963">Cytoplasm</keyword>
<keyword id="KW-0210">Decarboxylase</keyword>
<keyword id="KW-0456">Lyase</keyword>
<keyword id="KW-0627">Porphyrin biosynthesis</keyword>
<organism>
    <name type="scientific">Edwardsiella ictaluri (strain 93-146)</name>
    <dbReference type="NCBI Taxonomy" id="634503"/>
    <lineage>
        <taxon>Bacteria</taxon>
        <taxon>Pseudomonadati</taxon>
        <taxon>Pseudomonadota</taxon>
        <taxon>Gammaproteobacteria</taxon>
        <taxon>Enterobacterales</taxon>
        <taxon>Hafniaceae</taxon>
        <taxon>Edwardsiella</taxon>
    </lineage>
</organism>
<proteinExistence type="inferred from homology"/>
<evidence type="ECO:0000255" key="1">
    <source>
        <dbReference type="HAMAP-Rule" id="MF_00218"/>
    </source>
</evidence>
<name>DCUP_EDWI9</name>
<sequence length="354" mass="39201">MTELKNDRYLRALLRQPVDVTPVWMMRQAGRYLPEYNATRAQAGNFIALCKNAELACEVTLQPLRRFPLDAAILFSDILTVPDAMGLGLYFETGEGPRFTHSVTCHADIQRLPIPDPEQELGYVMDAVRTIRRSLRGDVPLIGFSGSPWTLATYMVEGGSSKAFTKIKKVMFSDPAALHLLLDKLAQSVILYLNAQIRAGAQAVMIFDTWGGVLTGRDYREFSLRYMHQIVDGLQRESEGRRVPVTLFTKGGGQWLEAMADTGCDALGLDWTCDIADARRRVGGRVALQGNMDPSLLYAPPARIEQEVETILAGFGQGEGHICNLGHGIHPDVPPKHAGVFVDAVHRLSVPYHR</sequence>
<dbReference type="EC" id="4.1.1.37" evidence="1"/>
<dbReference type="EMBL" id="CP001600">
    <property type="protein sequence ID" value="ACR67426.1"/>
    <property type="molecule type" value="Genomic_DNA"/>
</dbReference>
<dbReference type="RefSeq" id="WP_015869638.1">
    <property type="nucleotide sequence ID" value="NZ_CP169062.1"/>
</dbReference>
<dbReference type="SMR" id="C5BHE8"/>
<dbReference type="STRING" id="67780.B6E78_12055"/>
<dbReference type="GeneID" id="69537286"/>
<dbReference type="KEGG" id="eic:NT01EI_0180"/>
<dbReference type="PATRIC" id="fig|634503.3.peg.162"/>
<dbReference type="HOGENOM" id="CLU_040933_0_0_6"/>
<dbReference type="OrthoDB" id="9806656at2"/>
<dbReference type="UniPathway" id="UPA00251">
    <property type="reaction ID" value="UER00321"/>
</dbReference>
<dbReference type="Proteomes" id="UP000001485">
    <property type="component" value="Chromosome"/>
</dbReference>
<dbReference type="GO" id="GO:0005829">
    <property type="term" value="C:cytosol"/>
    <property type="evidence" value="ECO:0007669"/>
    <property type="project" value="TreeGrafter"/>
</dbReference>
<dbReference type="GO" id="GO:0004853">
    <property type="term" value="F:uroporphyrinogen decarboxylase activity"/>
    <property type="evidence" value="ECO:0007669"/>
    <property type="project" value="UniProtKB-UniRule"/>
</dbReference>
<dbReference type="GO" id="GO:0019353">
    <property type="term" value="P:protoporphyrinogen IX biosynthetic process from glutamate"/>
    <property type="evidence" value="ECO:0007669"/>
    <property type="project" value="TreeGrafter"/>
</dbReference>
<dbReference type="CDD" id="cd00717">
    <property type="entry name" value="URO-D"/>
    <property type="match status" value="1"/>
</dbReference>
<dbReference type="FunFam" id="3.20.20.210:FF:000001">
    <property type="entry name" value="Uroporphyrinogen decarboxylase"/>
    <property type="match status" value="1"/>
</dbReference>
<dbReference type="Gene3D" id="3.20.20.210">
    <property type="match status" value="1"/>
</dbReference>
<dbReference type="HAMAP" id="MF_00218">
    <property type="entry name" value="URO_D"/>
    <property type="match status" value="1"/>
</dbReference>
<dbReference type="InterPro" id="IPR038071">
    <property type="entry name" value="UROD/MetE-like_sf"/>
</dbReference>
<dbReference type="InterPro" id="IPR006361">
    <property type="entry name" value="Uroporphyrinogen_deCO2ase_HemE"/>
</dbReference>
<dbReference type="InterPro" id="IPR000257">
    <property type="entry name" value="Uroporphyrinogen_deCOase"/>
</dbReference>
<dbReference type="NCBIfam" id="TIGR01464">
    <property type="entry name" value="hemE"/>
    <property type="match status" value="1"/>
</dbReference>
<dbReference type="PANTHER" id="PTHR21091">
    <property type="entry name" value="METHYLTETRAHYDROFOLATE:HOMOCYSTEINE METHYLTRANSFERASE RELATED"/>
    <property type="match status" value="1"/>
</dbReference>
<dbReference type="PANTHER" id="PTHR21091:SF169">
    <property type="entry name" value="UROPORPHYRINOGEN DECARBOXYLASE"/>
    <property type="match status" value="1"/>
</dbReference>
<dbReference type="Pfam" id="PF01208">
    <property type="entry name" value="URO-D"/>
    <property type="match status" value="1"/>
</dbReference>
<dbReference type="SUPFAM" id="SSF51726">
    <property type="entry name" value="UROD/MetE-like"/>
    <property type="match status" value="1"/>
</dbReference>
<dbReference type="PROSITE" id="PS00906">
    <property type="entry name" value="UROD_1"/>
    <property type="match status" value="1"/>
</dbReference>
<dbReference type="PROSITE" id="PS00907">
    <property type="entry name" value="UROD_2"/>
    <property type="match status" value="1"/>
</dbReference>
<feature type="chain" id="PRO_1000204231" description="Uroporphyrinogen decarboxylase">
    <location>
        <begin position="1"/>
        <end position="354"/>
    </location>
</feature>
<feature type="binding site" evidence="1">
    <location>
        <begin position="27"/>
        <end position="31"/>
    </location>
    <ligand>
        <name>substrate</name>
    </ligand>
</feature>
<feature type="binding site" evidence="1">
    <location>
        <position position="77"/>
    </location>
    <ligand>
        <name>substrate</name>
    </ligand>
</feature>
<feature type="binding site" evidence="1">
    <location>
        <position position="154"/>
    </location>
    <ligand>
        <name>substrate</name>
    </ligand>
</feature>
<feature type="binding site" evidence="1">
    <location>
        <position position="209"/>
    </location>
    <ligand>
        <name>substrate</name>
    </ligand>
</feature>
<feature type="binding site" evidence="1">
    <location>
        <position position="327"/>
    </location>
    <ligand>
        <name>substrate</name>
    </ligand>
</feature>
<feature type="site" description="Transition state stabilizer" evidence="1">
    <location>
        <position position="77"/>
    </location>
</feature>
<reference key="1">
    <citation type="submission" date="2009-03" db="EMBL/GenBank/DDBJ databases">
        <title>Complete genome sequence of Edwardsiella ictaluri 93-146.</title>
        <authorList>
            <person name="Williams M.L."/>
            <person name="Gillaspy A.F."/>
            <person name="Dyer D.W."/>
            <person name="Thune R.L."/>
            <person name="Waldbieser G.C."/>
            <person name="Schuster S.C."/>
            <person name="Gipson J."/>
            <person name="Zaitshik J."/>
            <person name="Landry C."/>
            <person name="Lawrence M.L."/>
        </authorList>
    </citation>
    <scope>NUCLEOTIDE SEQUENCE [LARGE SCALE GENOMIC DNA]</scope>
    <source>
        <strain>93-146</strain>
    </source>
</reference>
<comment type="function">
    <text evidence="1">Catalyzes the decarboxylation of four acetate groups of uroporphyrinogen-III to yield coproporphyrinogen-III.</text>
</comment>
<comment type="catalytic activity">
    <reaction evidence="1">
        <text>uroporphyrinogen III + 4 H(+) = coproporphyrinogen III + 4 CO2</text>
        <dbReference type="Rhea" id="RHEA:19865"/>
        <dbReference type="ChEBI" id="CHEBI:15378"/>
        <dbReference type="ChEBI" id="CHEBI:16526"/>
        <dbReference type="ChEBI" id="CHEBI:57308"/>
        <dbReference type="ChEBI" id="CHEBI:57309"/>
        <dbReference type="EC" id="4.1.1.37"/>
    </reaction>
</comment>
<comment type="pathway">
    <text evidence="1">Porphyrin-containing compound metabolism; protoporphyrin-IX biosynthesis; coproporphyrinogen-III from 5-aminolevulinate: step 4/4.</text>
</comment>
<comment type="subunit">
    <text evidence="1">Homodimer.</text>
</comment>
<comment type="subcellular location">
    <subcellularLocation>
        <location evidence="1">Cytoplasm</location>
    </subcellularLocation>
</comment>
<comment type="similarity">
    <text evidence="1">Belongs to the uroporphyrinogen decarboxylase family.</text>
</comment>